<feature type="chain" id="PRO_1000050309" description="Phosphoribosylformylglycinamidine synthase subunit PurL">
    <location>
        <begin position="1"/>
        <end position="724"/>
    </location>
</feature>
<feature type="active site" evidence="1">
    <location>
        <position position="46"/>
    </location>
</feature>
<feature type="active site" description="Proton acceptor" evidence="1">
    <location>
        <position position="92"/>
    </location>
</feature>
<feature type="binding site" evidence="1">
    <location>
        <position position="49"/>
    </location>
    <ligand>
        <name>ATP</name>
        <dbReference type="ChEBI" id="CHEBI:30616"/>
    </ligand>
</feature>
<feature type="binding site" evidence="1">
    <location>
        <position position="88"/>
    </location>
    <ligand>
        <name>ATP</name>
        <dbReference type="ChEBI" id="CHEBI:30616"/>
    </ligand>
</feature>
<feature type="binding site" evidence="1">
    <location>
        <position position="90"/>
    </location>
    <ligand>
        <name>Mg(2+)</name>
        <dbReference type="ChEBI" id="CHEBI:18420"/>
        <label>1</label>
    </ligand>
</feature>
<feature type="binding site" evidence="1">
    <location>
        <begin position="91"/>
        <end position="94"/>
    </location>
    <ligand>
        <name>substrate</name>
    </ligand>
</feature>
<feature type="binding site" evidence="1">
    <location>
        <position position="113"/>
    </location>
    <ligand>
        <name>substrate</name>
    </ligand>
</feature>
<feature type="binding site" evidence="1">
    <location>
        <position position="114"/>
    </location>
    <ligand>
        <name>Mg(2+)</name>
        <dbReference type="ChEBI" id="CHEBI:18420"/>
        <label>2</label>
    </ligand>
</feature>
<feature type="binding site" evidence="1">
    <location>
        <position position="237"/>
    </location>
    <ligand>
        <name>substrate</name>
    </ligand>
</feature>
<feature type="binding site" evidence="1">
    <location>
        <position position="265"/>
    </location>
    <ligand>
        <name>Mg(2+)</name>
        <dbReference type="ChEBI" id="CHEBI:18420"/>
        <label>2</label>
    </ligand>
</feature>
<feature type="binding site" evidence="1">
    <location>
        <begin position="309"/>
        <end position="311"/>
    </location>
    <ligand>
        <name>substrate</name>
    </ligand>
</feature>
<feature type="binding site" evidence="1">
    <location>
        <position position="489"/>
    </location>
    <ligand>
        <name>ATP</name>
        <dbReference type="ChEBI" id="CHEBI:30616"/>
    </ligand>
</feature>
<feature type="binding site" evidence="1">
    <location>
        <position position="526"/>
    </location>
    <ligand>
        <name>ATP</name>
        <dbReference type="ChEBI" id="CHEBI:30616"/>
    </ligand>
</feature>
<feature type="binding site" evidence="1">
    <location>
        <position position="527"/>
    </location>
    <ligand>
        <name>Mg(2+)</name>
        <dbReference type="ChEBI" id="CHEBI:18420"/>
        <label>1</label>
    </ligand>
</feature>
<feature type="binding site" evidence="1">
    <location>
        <position position="529"/>
    </location>
    <ligand>
        <name>substrate</name>
    </ligand>
</feature>
<accession>Q0BRI4</accession>
<comment type="function">
    <text evidence="1">Part of the phosphoribosylformylglycinamidine synthase complex involved in the purines biosynthetic pathway. Catalyzes the ATP-dependent conversion of formylglycinamide ribonucleotide (FGAR) and glutamine to yield formylglycinamidine ribonucleotide (FGAM) and glutamate. The FGAM synthase complex is composed of three subunits. PurQ produces an ammonia molecule by converting glutamine to glutamate. PurL transfers the ammonia molecule to FGAR to form FGAM in an ATP-dependent manner. PurS interacts with PurQ and PurL and is thought to assist in the transfer of the ammonia molecule from PurQ to PurL.</text>
</comment>
<comment type="catalytic activity">
    <reaction evidence="1">
        <text>N(2)-formyl-N(1)-(5-phospho-beta-D-ribosyl)glycinamide + L-glutamine + ATP + H2O = 2-formamido-N(1)-(5-O-phospho-beta-D-ribosyl)acetamidine + L-glutamate + ADP + phosphate + H(+)</text>
        <dbReference type="Rhea" id="RHEA:17129"/>
        <dbReference type="ChEBI" id="CHEBI:15377"/>
        <dbReference type="ChEBI" id="CHEBI:15378"/>
        <dbReference type="ChEBI" id="CHEBI:29985"/>
        <dbReference type="ChEBI" id="CHEBI:30616"/>
        <dbReference type="ChEBI" id="CHEBI:43474"/>
        <dbReference type="ChEBI" id="CHEBI:58359"/>
        <dbReference type="ChEBI" id="CHEBI:147286"/>
        <dbReference type="ChEBI" id="CHEBI:147287"/>
        <dbReference type="ChEBI" id="CHEBI:456216"/>
        <dbReference type="EC" id="6.3.5.3"/>
    </reaction>
</comment>
<comment type="pathway">
    <text evidence="1">Purine metabolism; IMP biosynthesis via de novo pathway; 5-amino-1-(5-phospho-D-ribosyl)imidazole from N(2)-formyl-N(1)-(5-phospho-D-ribosyl)glycinamide: step 1/2.</text>
</comment>
<comment type="subunit">
    <text evidence="1">Monomer. Part of the FGAM synthase complex composed of 1 PurL, 1 PurQ and 2 PurS subunits.</text>
</comment>
<comment type="subcellular location">
    <subcellularLocation>
        <location evidence="1">Cytoplasm</location>
    </subcellularLocation>
</comment>
<comment type="similarity">
    <text evidence="1">Belongs to the FGAMS family.</text>
</comment>
<protein>
    <recommendedName>
        <fullName evidence="1">Phosphoribosylformylglycinamidine synthase subunit PurL</fullName>
        <shortName evidence="1">FGAM synthase</shortName>
        <ecNumber evidence="1">6.3.5.3</ecNumber>
    </recommendedName>
    <alternativeName>
        <fullName evidence="1">Formylglycinamide ribonucleotide amidotransferase subunit II</fullName>
        <shortName evidence="1">FGAR amidotransferase II</shortName>
        <shortName evidence="1">FGAR-AT II</shortName>
    </alternativeName>
    <alternativeName>
        <fullName evidence="1">Glutamine amidotransferase PurL</fullName>
    </alternativeName>
    <alternativeName>
        <fullName evidence="1">Phosphoribosylformylglycinamidine synthase subunit II</fullName>
    </alternativeName>
</protein>
<organism>
    <name type="scientific">Granulibacter bethesdensis (strain ATCC BAA-1260 / CGDNIH1)</name>
    <dbReference type="NCBI Taxonomy" id="391165"/>
    <lineage>
        <taxon>Bacteria</taxon>
        <taxon>Pseudomonadati</taxon>
        <taxon>Pseudomonadota</taxon>
        <taxon>Alphaproteobacteria</taxon>
        <taxon>Acetobacterales</taxon>
        <taxon>Acetobacteraceae</taxon>
        <taxon>Granulibacter</taxon>
    </lineage>
</organism>
<name>PURL_GRABC</name>
<keyword id="KW-0067">ATP-binding</keyword>
<keyword id="KW-0963">Cytoplasm</keyword>
<keyword id="KW-0436">Ligase</keyword>
<keyword id="KW-0460">Magnesium</keyword>
<keyword id="KW-0479">Metal-binding</keyword>
<keyword id="KW-0547">Nucleotide-binding</keyword>
<keyword id="KW-0658">Purine biosynthesis</keyword>
<keyword id="KW-1185">Reference proteome</keyword>
<dbReference type="EC" id="6.3.5.3" evidence="1"/>
<dbReference type="EMBL" id="CP000394">
    <property type="protein sequence ID" value="ABI62568.1"/>
    <property type="molecule type" value="Genomic_DNA"/>
</dbReference>
<dbReference type="RefSeq" id="WP_011632372.1">
    <property type="nucleotide sequence ID" value="NC_008343.2"/>
</dbReference>
<dbReference type="SMR" id="Q0BRI4"/>
<dbReference type="STRING" id="391165.GbCGDNIH1_1670"/>
<dbReference type="KEGG" id="gbe:GbCGDNIH1_1670"/>
<dbReference type="eggNOG" id="COG0046">
    <property type="taxonomic scope" value="Bacteria"/>
</dbReference>
<dbReference type="HOGENOM" id="CLU_003100_0_1_5"/>
<dbReference type="OrthoDB" id="9804441at2"/>
<dbReference type="UniPathway" id="UPA00074">
    <property type="reaction ID" value="UER00128"/>
</dbReference>
<dbReference type="Proteomes" id="UP000001963">
    <property type="component" value="Chromosome"/>
</dbReference>
<dbReference type="GO" id="GO:0005737">
    <property type="term" value="C:cytoplasm"/>
    <property type="evidence" value="ECO:0007669"/>
    <property type="project" value="UniProtKB-SubCell"/>
</dbReference>
<dbReference type="GO" id="GO:0005524">
    <property type="term" value="F:ATP binding"/>
    <property type="evidence" value="ECO:0007669"/>
    <property type="project" value="UniProtKB-UniRule"/>
</dbReference>
<dbReference type="GO" id="GO:0000287">
    <property type="term" value="F:magnesium ion binding"/>
    <property type="evidence" value="ECO:0007669"/>
    <property type="project" value="UniProtKB-UniRule"/>
</dbReference>
<dbReference type="GO" id="GO:0004642">
    <property type="term" value="F:phosphoribosylformylglycinamidine synthase activity"/>
    <property type="evidence" value="ECO:0007669"/>
    <property type="project" value="UniProtKB-UniRule"/>
</dbReference>
<dbReference type="GO" id="GO:0006189">
    <property type="term" value="P:'de novo' IMP biosynthetic process"/>
    <property type="evidence" value="ECO:0007669"/>
    <property type="project" value="UniProtKB-UniRule"/>
</dbReference>
<dbReference type="CDD" id="cd02203">
    <property type="entry name" value="PurL_repeat1"/>
    <property type="match status" value="1"/>
</dbReference>
<dbReference type="CDD" id="cd02204">
    <property type="entry name" value="PurL_repeat2"/>
    <property type="match status" value="1"/>
</dbReference>
<dbReference type="FunFam" id="3.30.1330.10:FF:000004">
    <property type="entry name" value="Phosphoribosylformylglycinamidine synthase subunit PurL"/>
    <property type="match status" value="1"/>
</dbReference>
<dbReference type="Gene3D" id="3.90.650.10">
    <property type="entry name" value="PurM-like C-terminal domain"/>
    <property type="match status" value="2"/>
</dbReference>
<dbReference type="Gene3D" id="3.30.1330.10">
    <property type="entry name" value="PurM-like, N-terminal domain"/>
    <property type="match status" value="2"/>
</dbReference>
<dbReference type="HAMAP" id="MF_00420">
    <property type="entry name" value="PurL_2"/>
    <property type="match status" value="1"/>
</dbReference>
<dbReference type="InterPro" id="IPR010074">
    <property type="entry name" value="PRibForGlyAmidine_synth_PurL"/>
</dbReference>
<dbReference type="InterPro" id="IPR041609">
    <property type="entry name" value="PurL_linker"/>
</dbReference>
<dbReference type="InterPro" id="IPR010918">
    <property type="entry name" value="PurM-like_C_dom"/>
</dbReference>
<dbReference type="InterPro" id="IPR036676">
    <property type="entry name" value="PurM-like_C_sf"/>
</dbReference>
<dbReference type="InterPro" id="IPR016188">
    <property type="entry name" value="PurM-like_N"/>
</dbReference>
<dbReference type="InterPro" id="IPR036921">
    <property type="entry name" value="PurM-like_N_sf"/>
</dbReference>
<dbReference type="NCBIfam" id="TIGR01736">
    <property type="entry name" value="FGAM_synth_II"/>
    <property type="match status" value="1"/>
</dbReference>
<dbReference type="NCBIfam" id="NF002290">
    <property type="entry name" value="PRK01213.1"/>
    <property type="match status" value="1"/>
</dbReference>
<dbReference type="PANTHER" id="PTHR43555">
    <property type="entry name" value="PHOSPHORIBOSYLFORMYLGLYCINAMIDINE SYNTHASE SUBUNIT PURL"/>
    <property type="match status" value="1"/>
</dbReference>
<dbReference type="PANTHER" id="PTHR43555:SF1">
    <property type="entry name" value="PHOSPHORIBOSYLFORMYLGLYCINAMIDINE SYNTHASE SUBUNIT PURL"/>
    <property type="match status" value="1"/>
</dbReference>
<dbReference type="Pfam" id="PF00586">
    <property type="entry name" value="AIRS"/>
    <property type="match status" value="2"/>
</dbReference>
<dbReference type="Pfam" id="PF02769">
    <property type="entry name" value="AIRS_C"/>
    <property type="match status" value="2"/>
</dbReference>
<dbReference type="Pfam" id="PF18072">
    <property type="entry name" value="FGAR-AT_linker"/>
    <property type="match status" value="1"/>
</dbReference>
<dbReference type="PIRSF" id="PIRSF001587">
    <property type="entry name" value="FGAM_synthase_II"/>
    <property type="match status" value="1"/>
</dbReference>
<dbReference type="SUPFAM" id="SSF56042">
    <property type="entry name" value="PurM C-terminal domain-like"/>
    <property type="match status" value="2"/>
</dbReference>
<dbReference type="SUPFAM" id="SSF55326">
    <property type="entry name" value="PurM N-terminal domain-like"/>
    <property type="match status" value="2"/>
</dbReference>
<proteinExistence type="inferred from homology"/>
<evidence type="ECO:0000255" key="1">
    <source>
        <dbReference type="HAMAP-Rule" id="MF_00420"/>
    </source>
</evidence>
<sequence length="724" mass="76675">MTRDVTLSLAQEFGLDAAEYQRVLDIMGRTPSFTELGIFSVMWSEHCSYKSSRHWLKQLPTKAPWVIHGPGENAGVVDIGDGLAAIFKMESHNHPSFIEPYQGAATGVGGILRDVFTMGARPVANLNALRFGSPDHPATKRIIDGVVRGIGGYGNCVGVPTVGGEVNFHPSYNGNPLVNAMTVGIAPKDRIFLSAAAGVGNPVIYVGSKTGRDGIHGATMASTEFGADSEEKRPTVQVGDPFTEKLLIEACLELMATDAIIAIQDMGAAGLTSSSVEMAGKGGVGIELDLDAVPQREEGMNAYEMMLSESQERMLMILRPDRQDVARAIFEKWELDFAVIGHLTDTGHIVVKHQGVVEADIPLDPLAEQAPLYQRPTVETPKRAPLGEVADPVGIASALLTLIGSPDIASRRWIWDQYDSTVGGQTVRRPGAADAAVVRLDGTERALALTTDCTPRYCFADPEVGGAQAVAETWRNLTAVGAHPLAITDNMNFGNPQKPEIMGQFAAAIRGMREACLTLDFPVVSGNVSLYNETEGTGILPTPAIGGLGVLDNAETATGLSLRPGLDLVLIGTGGTTLGQSLWLREIAGREDGPPPAVDLAAERRHGDLVRSLIHQGKVAACHDLSDGGLLVAIAEMAIAGHTGAVLSGEGDHVFWYGEDQARYIIATTYSAAVLDAAKAANVPASLIGRAEGTDLQVPGCTPISVATLRERHEAFLPALMAQR</sequence>
<reference key="1">
    <citation type="journal article" date="2007" name="J. Bacteriol.">
        <title>Genome sequence analysis of the emerging human pathogenic acetic acid bacterium Granulibacter bethesdensis.</title>
        <authorList>
            <person name="Greenberg D.E."/>
            <person name="Porcella S.F."/>
            <person name="Zelazny A.M."/>
            <person name="Virtaneva K."/>
            <person name="Sturdevant D.E."/>
            <person name="Kupko J.J. III"/>
            <person name="Barbian K.D."/>
            <person name="Babar A."/>
            <person name="Dorward D.W."/>
            <person name="Holland S.M."/>
        </authorList>
    </citation>
    <scope>NUCLEOTIDE SEQUENCE [LARGE SCALE GENOMIC DNA]</scope>
    <source>
        <strain>ATCC BAA-1260 / CGDNIH1</strain>
    </source>
</reference>
<gene>
    <name evidence="1" type="primary">purL</name>
    <name type="ordered locus">GbCGDNIH1_1670</name>
</gene>